<accession>P67258</accession>
<accession>A1IR44</accession>
<accession>Q9JRC2</accession>
<gene>
    <name type="ordered locus">NMA1005</name>
</gene>
<comment type="similarity">
    <text evidence="1">Belongs to the UPF0125 (RnfH) family.</text>
</comment>
<name>Y1005_NEIMA</name>
<proteinExistence type="inferred from homology"/>
<protein>
    <recommendedName>
        <fullName>UPF0125 protein NMA1005</fullName>
    </recommendedName>
</protein>
<dbReference type="EMBL" id="AL157959">
    <property type="protein sequence ID" value="CAM08228.1"/>
    <property type="molecule type" value="Genomic_DNA"/>
</dbReference>
<dbReference type="RefSeq" id="WP_002217575.1">
    <property type="nucleotide sequence ID" value="NC_003116.1"/>
</dbReference>
<dbReference type="SMR" id="P67258"/>
<dbReference type="EnsemblBacteria" id="CAM08228">
    <property type="protein sequence ID" value="CAM08228"/>
    <property type="gene ID" value="NMA1005"/>
</dbReference>
<dbReference type="KEGG" id="nma:NMA1005"/>
<dbReference type="HOGENOM" id="CLU_150721_1_0_4"/>
<dbReference type="Proteomes" id="UP000000626">
    <property type="component" value="Chromosome"/>
</dbReference>
<dbReference type="Gene3D" id="3.10.20.280">
    <property type="entry name" value="RnfH-like"/>
    <property type="match status" value="1"/>
</dbReference>
<dbReference type="HAMAP" id="MF_00460">
    <property type="entry name" value="UPF0125_RnfH"/>
    <property type="match status" value="1"/>
</dbReference>
<dbReference type="InterPro" id="IPR016155">
    <property type="entry name" value="Mopterin_synth/thiamin_S_b"/>
</dbReference>
<dbReference type="InterPro" id="IPR005346">
    <property type="entry name" value="RnfH"/>
</dbReference>
<dbReference type="InterPro" id="IPR037021">
    <property type="entry name" value="RnfH_sf"/>
</dbReference>
<dbReference type="NCBIfam" id="NF002490">
    <property type="entry name" value="PRK01777.1"/>
    <property type="match status" value="1"/>
</dbReference>
<dbReference type="PANTHER" id="PTHR37483">
    <property type="entry name" value="UPF0125 PROTEIN RATB"/>
    <property type="match status" value="1"/>
</dbReference>
<dbReference type="PANTHER" id="PTHR37483:SF1">
    <property type="entry name" value="UPF0125 PROTEIN RATB"/>
    <property type="match status" value="1"/>
</dbReference>
<dbReference type="Pfam" id="PF03658">
    <property type="entry name" value="Ub-RnfH"/>
    <property type="match status" value="1"/>
</dbReference>
<dbReference type="SUPFAM" id="SSF54285">
    <property type="entry name" value="MoaD/ThiS"/>
    <property type="match status" value="1"/>
</dbReference>
<sequence length="92" mass="10344">MLEIEIVYGLPDRQVLKTMQLAEGTTVRAAALQSGLDGIFEDLNLHSAPLGIFGKAVKDDTPLRDGDRIEVYRPLLIDPKEARRKRVQNQEE</sequence>
<evidence type="ECO:0000305" key="1"/>
<organism>
    <name type="scientific">Neisseria meningitidis serogroup A / serotype 4A (strain DSM 15465 / Z2491)</name>
    <dbReference type="NCBI Taxonomy" id="122587"/>
    <lineage>
        <taxon>Bacteria</taxon>
        <taxon>Pseudomonadati</taxon>
        <taxon>Pseudomonadota</taxon>
        <taxon>Betaproteobacteria</taxon>
        <taxon>Neisseriales</taxon>
        <taxon>Neisseriaceae</taxon>
        <taxon>Neisseria</taxon>
    </lineage>
</organism>
<reference key="1">
    <citation type="journal article" date="2000" name="Nature">
        <title>Complete DNA sequence of a serogroup A strain of Neisseria meningitidis Z2491.</title>
        <authorList>
            <person name="Parkhill J."/>
            <person name="Achtman M."/>
            <person name="James K.D."/>
            <person name="Bentley S.D."/>
            <person name="Churcher C.M."/>
            <person name="Klee S.R."/>
            <person name="Morelli G."/>
            <person name="Basham D."/>
            <person name="Brown D."/>
            <person name="Chillingworth T."/>
            <person name="Davies R.M."/>
            <person name="Davis P."/>
            <person name="Devlin K."/>
            <person name="Feltwell T."/>
            <person name="Hamlin N."/>
            <person name="Holroyd S."/>
            <person name="Jagels K."/>
            <person name="Leather S."/>
            <person name="Moule S."/>
            <person name="Mungall K.L."/>
            <person name="Quail M.A."/>
            <person name="Rajandream M.A."/>
            <person name="Rutherford K.M."/>
            <person name="Simmonds M."/>
            <person name="Skelton J."/>
            <person name="Whitehead S."/>
            <person name="Spratt B.G."/>
            <person name="Barrell B.G."/>
        </authorList>
    </citation>
    <scope>NUCLEOTIDE SEQUENCE [LARGE SCALE GENOMIC DNA]</scope>
    <source>
        <strain>DSM 15465 / Z2491</strain>
    </source>
</reference>
<feature type="chain" id="PRO_0000192492" description="UPF0125 protein NMA1005">
    <location>
        <begin position="1"/>
        <end position="92"/>
    </location>
</feature>